<name>ARGU_CORGL</name>
<reference key="1">
    <citation type="journal article" date="2003" name="Appl. Microbiol. Biotechnol.">
        <title>The Corynebacterium glutamicum genome: features and impacts on biotechnological processes.</title>
        <authorList>
            <person name="Ikeda M."/>
            <person name="Nakagawa S."/>
        </authorList>
    </citation>
    <scope>NUCLEOTIDE SEQUENCE [LARGE SCALE GENOMIC DNA]</scope>
    <source>
        <strain>ATCC 13032 / DSM 20300 / JCM 1318 / BCRC 11384 / CCUG 27702 / LMG 3730 / NBRC 12168 / NCIMB 10025 / NRRL B-2784 / 534</strain>
    </source>
</reference>
<reference key="2">
    <citation type="journal article" date="2003" name="J. Biotechnol.">
        <title>The complete Corynebacterium glutamicum ATCC 13032 genome sequence and its impact on the production of L-aspartate-derived amino acids and vitamins.</title>
        <authorList>
            <person name="Kalinowski J."/>
            <person name="Bathe B."/>
            <person name="Bartels D."/>
            <person name="Bischoff N."/>
            <person name="Bott M."/>
            <person name="Burkovski A."/>
            <person name="Dusch N."/>
            <person name="Eggeling L."/>
            <person name="Eikmanns B.J."/>
            <person name="Gaigalat L."/>
            <person name="Goesmann A."/>
            <person name="Hartmann M."/>
            <person name="Huthmacher K."/>
            <person name="Kraemer R."/>
            <person name="Linke B."/>
            <person name="McHardy A.C."/>
            <person name="Meyer F."/>
            <person name="Moeckel B."/>
            <person name="Pfefferle W."/>
            <person name="Puehler A."/>
            <person name="Rey D.A."/>
            <person name="Rueckert C."/>
            <person name="Rupp O."/>
            <person name="Sahm H."/>
            <person name="Wendisch V.F."/>
            <person name="Wiegraebe I."/>
            <person name="Tauch A."/>
        </authorList>
    </citation>
    <scope>NUCLEOTIDE SEQUENCE [LARGE SCALE GENOMIC DNA]</scope>
    <source>
        <strain>ATCC 13032 / DSM 20300 / JCM 1318 / BCRC 11384 / CCUG 27702 / LMG 3730 / NBRC 12168 / NCIMB 10025 / NRRL B-2784 / 534</strain>
    </source>
</reference>
<reference key="3">
    <citation type="journal article" date="2023" name="Microb. Cell Fact.">
        <title>Discovery of novel amino acid production traits by evolution of synthetic co-cultures.</title>
        <authorList>
            <person name="Zuchowski R."/>
            <person name="Schito S."/>
            <person name="Neuheuser F."/>
            <person name="Menke P."/>
            <person name="Berger D."/>
            <person name="Hollmann N."/>
            <person name="Gujar S."/>
            <person name="Sundermeyer L."/>
            <person name="Mack C."/>
            <person name="Wirtz A."/>
            <person name="Weiergraeber O.H."/>
            <person name="Polen T."/>
            <person name="Bott M."/>
            <person name="Noack S."/>
            <person name="Baumgart M."/>
        </authorList>
    </citation>
    <scope>FUNCTION IN ARGININE IMPORT</scope>
    <scope>DISRUPTION PHENOTYPE</scope>
    <source>
        <strain>ATCC 13032 / DSM 20300 / JCM 1318 / BCRC 11384 / CCUG 27702 / LMG 3730 / NBRC 12168 / NCIMB 10025 / NRRL B-2784 / 534</strain>
    </source>
</reference>
<sequence>MSDLNQGPGASTAQPKPIEAKPLRHPGRWVAAAIIVALLAWFIISALNNEAYGWDTYRSYLFDTRIATAALHTIALTLLSMILGVVLGAILAVMRMSGNPVMQGVAWLYLWIFRGTPIYVQLVFWGLLGSLYQSINLGFAEIDLQSLLSNMFLLAVIGLGLNEAAYMAEIVRSGIQAVPEGQMEASKALGMNWSMTMRRTILPQAMRIIIPPTGNELISMLKTTSLVVAIPYSLELYGRSMDIAYSLFEPVPMLLVAASWYLVITSILMVGQYYLEKHFEKGSTRTLTARQLAALADAEGAIPGNVTVVPETSKEN</sequence>
<proteinExistence type="evidence at protein level"/>
<accession>Q8NQU3</accession>
<accession>Q6M5M8</accession>
<organism>
    <name type="scientific">Corynebacterium glutamicum (strain ATCC 13032 / DSM 20300 / JCM 1318 / BCRC 11384 / CCUG 27702 / LMG 3730 / NBRC 12168 / NCIMB 10025 / NRRL B-2784 / 534)</name>
    <dbReference type="NCBI Taxonomy" id="196627"/>
    <lineage>
        <taxon>Bacteria</taxon>
        <taxon>Bacillati</taxon>
        <taxon>Actinomycetota</taxon>
        <taxon>Actinomycetes</taxon>
        <taxon>Mycobacteriales</taxon>
        <taxon>Corynebacteriaceae</taxon>
        <taxon>Corynebacterium</taxon>
    </lineage>
</organism>
<gene>
    <name evidence="5" type="primary">argU</name>
    <name evidence="8" type="ordered locus">Cgl1331</name>
    <name evidence="9" type="ordered locus">cg1503</name>
</gene>
<keyword id="KW-0029">Amino-acid transport</keyword>
<keyword id="KW-1003">Cell membrane</keyword>
<keyword id="KW-0472">Membrane</keyword>
<keyword id="KW-1185">Reference proteome</keyword>
<keyword id="KW-0812">Transmembrane</keyword>
<keyword id="KW-1133">Transmembrane helix</keyword>
<keyword id="KW-0813">Transport</keyword>
<evidence type="ECO:0000255" key="1"/>
<evidence type="ECO:0000255" key="2">
    <source>
        <dbReference type="PROSITE-ProRule" id="PRU00441"/>
    </source>
</evidence>
<evidence type="ECO:0000256" key="3">
    <source>
        <dbReference type="SAM" id="MobiDB-lite"/>
    </source>
</evidence>
<evidence type="ECO:0000269" key="4">
    <source>
    </source>
</evidence>
<evidence type="ECO:0000303" key="5">
    <source>
    </source>
</evidence>
<evidence type="ECO:0000305" key="6"/>
<evidence type="ECO:0000305" key="7">
    <source>
    </source>
</evidence>
<evidence type="ECO:0000312" key="8">
    <source>
        <dbReference type="EMBL" id="BAB98724.1"/>
    </source>
</evidence>
<evidence type="ECO:0000312" key="9">
    <source>
        <dbReference type="EMBL" id="CAF21339.1"/>
    </source>
</evidence>
<comment type="function">
    <text evidence="4 6">Part of the ABC transporter complex ArgTUV involved in L-arginine import (PubMed:37061714). May also transport L-citrulline (PubMed:37061714). Probably responsible for the translocation of the substrate across the membrane (Probable).</text>
</comment>
<comment type="subunit">
    <text evidence="7">The complex is probably composed of two ATP-binding proteins (ArgV), two transmembrane proteins (ArgU) and a solute-binding protein (ArgT).</text>
</comment>
<comment type="subcellular location">
    <subcellularLocation>
        <location evidence="6">Cell membrane</location>
        <topology evidence="1">Multi-pass membrane protein</topology>
    </subcellularLocation>
</comment>
<comment type="disruption phenotype">
    <text evidence="4">Deletion of argTUV in an L-arginine producer strain results in a faster and 24% higher L-arginine production in comparison to the parental strain.</text>
</comment>
<comment type="similarity">
    <text evidence="6">Belongs to the binding-protein-dependent transport system permease family.</text>
</comment>
<dbReference type="EMBL" id="BA000036">
    <property type="protein sequence ID" value="BAB98724.1"/>
    <property type="molecule type" value="Genomic_DNA"/>
</dbReference>
<dbReference type="EMBL" id="BX927152">
    <property type="protein sequence ID" value="CAF21339.1"/>
    <property type="molecule type" value="Genomic_DNA"/>
</dbReference>
<dbReference type="RefSeq" id="NP_600551.1">
    <property type="nucleotide sequence ID" value="NC_003450.3"/>
</dbReference>
<dbReference type="RefSeq" id="WP_003858824.1">
    <property type="nucleotide sequence ID" value="NC_006958.1"/>
</dbReference>
<dbReference type="SMR" id="Q8NQU3"/>
<dbReference type="STRING" id="196627.cg1503"/>
<dbReference type="KEGG" id="cgb:cg1503"/>
<dbReference type="KEGG" id="cgl:Cgl1331"/>
<dbReference type="PATRIC" id="fig|196627.13.peg.1301"/>
<dbReference type="eggNOG" id="COG0765">
    <property type="taxonomic scope" value="Bacteria"/>
</dbReference>
<dbReference type="HOGENOM" id="CLU_019602_1_2_11"/>
<dbReference type="OrthoDB" id="92598at2"/>
<dbReference type="BioCyc" id="CORYNE:G18NG-10909-MONOMER"/>
<dbReference type="Proteomes" id="UP000000582">
    <property type="component" value="Chromosome"/>
</dbReference>
<dbReference type="Proteomes" id="UP000001009">
    <property type="component" value="Chromosome"/>
</dbReference>
<dbReference type="GO" id="GO:0043190">
    <property type="term" value="C:ATP-binding cassette (ABC) transporter complex"/>
    <property type="evidence" value="ECO:0007669"/>
    <property type="project" value="InterPro"/>
</dbReference>
<dbReference type="GO" id="GO:0022857">
    <property type="term" value="F:transmembrane transporter activity"/>
    <property type="evidence" value="ECO:0007669"/>
    <property type="project" value="InterPro"/>
</dbReference>
<dbReference type="GO" id="GO:0006865">
    <property type="term" value="P:amino acid transport"/>
    <property type="evidence" value="ECO:0007669"/>
    <property type="project" value="UniProtKB-KW"/>
</dbReference>
<dbReference type="CDD" id="cd06261">
    <property type="entry name" value="TM_PBP2"/>
    <property type="match status" value="1"/>
</dbReference>
<dbReference type="Gene3D" id="1.10.3720.10">
    <property type="entry name" value="MetI-like"/>
    <property type="match status" value="1"/>
</dbReference>
<dbReference type="InterPro" id="IPR010065">
    <property type="entry name" value="AA_ABC_transptr_permease_3TM"/>
</dbReference>
<dbReference type="InterPro" id="IPR043429">
    <property type="entry name" value="ArtM/GltK/GlnP/TcyL/YhdX-like"/>
</dbReference>
<dbReference type="InterPro" id="IPR000515">
    <property type="entry name" value="MetI-like"/>
</dbReference>
<dbReference type="InterPro" id="IPR035906">
    <property type="entry name" value="MetI-like_sf"/>
</dbReference>
<dbReference type="NCBIfam" id="TIGR01726">
    <property type="entry name" value="HEQRo_perm_3TM"/>
    <property type="match status" value="1"/>
</dbReference>
<dbReference type="PANTHER" id="PTHR30614:SF0">
    <property type="entry name" value="L-CYSTINE TRANSPORT SYSTEM PERMEASE PROTEIN TCYL"/>
    <property type="match status" value="1"/>
</dbReference>
<dbReference type="PANTHER" id="PTHR30614">
    <property type="entry name" value="MEMBRANE COMPONENT OF AMINO ACID ABC TRANSPORTER"/>
    <property type="match status" value="1"/>
</dbReference>
<dbReference type="Pfam" id="PF00528">
    <property type="entry name" value="BPD_transp_1"/>
    <property type="match status" value="1"/>
</dbReference>
<dbReference type="SUPFAM" id="SSF161098">
    <property type="entry name" value="MetI-like"/>
    <property type="match status" value="1"/>
</dbReference>
<dbReference type="PROSITE" id="PS50928">
    <property type="entry name" value="ABC_TM1"/>
    <property type="match status" value="1"/>
</dbReference>
<feature type="chain" id="PRO_0000459380" description="Arginine transport system permease protein ArgU">
    <location>
        <begin position="1"/>
        <end position="316"/>
    </location>
</feature>
<feature type="transmembrane region" description="Helical" evidence="1">
    <location>
        <begin position="29"/>
        <end position="49"/>
    </location>
</feature>
<feature type="transmembrane region" description="Helical" evidence="1">
    <location>
        <begin position="74"/>
        <end position="94"/>
    </location>
</feature>
<feature type="transmembrane region" description="Helical" evidence="1">
    <location>
        <begin position="108"/>
        <end position="128"/>
    </location>
</feature>
<feature type="transmembrane region" description="Helical" evidence="1">
    <location>
        <begin position="151"/>
        <end position="171"/>
    </location>
</feature>
<feature type="transmembrane region" description="Helical" evidence="1">
    <location>
        <begin position="217"/>
        <end position="237"/>
    </location>
</feature>
<feature type="transmembrane region" description="Helical" evidence="1">
    <location>
        <begin position="251"/>
        <end position="271"/>
    </location>
</feature>
<feature type="domain" description="ABC transmembrane type-1" evidence="2">
    <location>
        <begin position="70"/>
        <end position="274"/>
    </location>
</feature>
<feature type="region of interest" description="Disordered" evidence="3">
    <location>
        <begin position="1"/>
        <end position="20"/>
    </location>
</feature>
<feature type="compositionally biased region" description="Polar residues" evidence="3">
    <location>
        <begin position="1"/>
        <end position="14"/>
    </location>
</feature>
<protein>
    <recommendedName>
        <fullName evidence="6">Arginine transport system permease protein ArgU</fullName>
    </recommendedName>
</protein>